<sequence>MYCIEEKIEKALGIKEASLVLKNCNIVNVFSSEIIRGDLAIDGDTIIGIGKYKGKTEIDLSNKYVAPGFIDSHVHIESSMVSPKEFARAVISRGTTTIIVDPHEIANVCGMDGIKYMMEETKNMPLDVFFMLSSCVPATSFETSGAVLKAEDLKELIDSDRVLGLGEMMNYPGVLSREEEVLNKLKLAGSYNKIVDGHAPSVRGNELNAYNLAGIKTDHECSSIEEMNEKIRNGMYIAIREGSAAKNLDILIKGVNAKNERRIMFCADDRHPDDILKSGHMDNCVRRAIYNGIENTAAIRMASINAAECYKLERVGAIAPSYKADLVVLEDLKDVKVNMVIKSGEVVFKDNKHLKDMGSKSDITKVSNTVNIKKVSEENLELKLDTDVCSIISVALNSISTKNVKRKVNLSNGIFKCELNYGINKVAVIERHKKSGSIGIGLVENFGLKRGAIASTVAHDSHNIIVLGNNDEDMVKAVNEIERVGGGITISLDGKIIETLELEIAGLMSNKSMEFVAERVSKMINICHNTLGVNKDIQPFMTLAFLALPVIPEIRITDKGVFDVVNFKFL</sequence>
<comment type="catalytic activity">
    <reaction evidence="1">
        <text>adenine + H2O + H(+) = hypoxanthine + NH4(+)</text>
        <dbReference type="Rhea" id="RHEA:23688"/>
        <dbReference type="ChEBI" id="CHEBI:15377"/>
        <dbReference type="ChEBI" id="CHEBI:15378"/>
        <dbReference type="ChEBI" id="CHEBI:16708"/>
        <dbReference type="ChEBI" id="CHEBI:17368"/>
        <dbReference type="ChEBI" id="CHEBI:28938"/>
        <dbReference type="EC" id="3.5.4.2"/>
    </reaction>
</comment>
<comment type="cofactor">
    <cofactor evidence="1">
        <name>Mn(2+)</name>
        <dbReference type="ChEBI" id="CHEBI:29035"/>
    </cofactor>
</comment>
<comment type="similarity">
    <text evidence="1">Belongs to the metallo-dependent hydrolases superfamily. Adenine deaminase family.</text>
</comment>
<gene>
    <name evidence="1" type="primary">ade</name>
    <name type="ordered locus">CA_C0887</name>
</gene>
<name>ADEC_CLOAB</name>
<accession>Q97KN0</accession>
<protein>
    <recommendedName>
        <fullName evidence="1">Adenine deaminase</fullName>
        <shortName evidence="1">Adenase</shortName>
        <shortName evidence="1">Adenine aminase</shortName>
        <ecNumber evidence="1">3.5.4.2</ecNumber>
    </recommendedName>
</protein>
<evidence type="ECO:0000255" key="1">
    <source>
        <dbReference type="HAMAP-Rule" id="MF_01518"/>
    </source>
</evidence>
<proteinExistence type="inferred from homology"/>
<dbReference type="EC" id="3.5.4.2" evidence="1"/>
<dbReference type="EMBL" id="AE001437">
    <property type="protein sequence ID" value="AAK78863.1"/>
    <property type="molecule type" value="Genomic_DNA"/>
</dbReference>
<dbReference type="PIR" id="D97009">
    <property type="entry name" value="D97009"/>
</dbReference>
<dbReference type="RefSeq" id="NP_347523.1">
    <property type="nucleotide sequence ID" value="NC_003030.1"/>
</dbReference>
<dbReference type="RefSeq" id="WP_010964205.1">
    <property type="nucleotide sequence ID" value="NC_003030.1"/>
</dbReference>
<dbReference type="SMR" id="Q97KN0"/>
<dbReference type="STRING" id="272562.CA_C0887"/>
<dbReference type="GeneID" id="44997398"/>
<dbReference type="KEGG" id="cac:CA_C0887"/>
<dbReference type="PATRIC" id="fig|272562.8.peg.1097"/>
<dbReference type="eggNOG" id="COG1001">
    <property type="taxonomic scope" value="Bacteria"/>
</dbReference>
<dbReference type="HOGENOM" id="CLU_027935_0_0_9"/>
<dbReference type="OrthoDB" id="9775607at2"/>
<dbReference type="Proteomes" id="UP000000814">
    <property type="component" value="Chromosome"/>
</dbReference>
<dbReference type="GO" id="GO:0000034">
    <property type="term" value="F:adenine deaminase activity"/>
    <property type="evidence" value="ECO:0007669"/>
    <property type="project" value="UniProtKB-UniRule"/>
</dbReference>
<dbReference type="GO" id="GO:0006146">
    <property type="term" value="P:adenine catabolic process"/>
    <property type="evidence" value="ECO:0007669"/>
    <property type="project" value="InterPro"/>
</dbReference>
<dbReference type="CDD" id="cd01295">
    <property type="entry name" value="AdeC"/>
    <property type="match status" value="1"/>
</dbReference>
<dbReference type="FunFam" id="3.20.20.140:FF:000016">
    <property type="entry name" value="Adenine deaminase"/>
    <property type="match status" value="1"/>
</dbReference>
<dbReference type="Gene3D" id="3.20.20.140">
    <property type="entry name" value="Metal-dependent hydrolases"/>
    <property type="match status" value="1"/>
</dbReference>
<dbReference type="Gene3D" id="2.30.40.10">
    <property type="entry name" value="Urease, subunit C, domain 1"/>
    <property type="match status" value="1"/>
</dbReference>
<dbReference type="HAMAP" id="MF_01518">
    <property type="entry name" value="Adenine_deamin"/>
    <property type="match status" value="1"/>
</dbReference>
<dbReference type="InterPro" id="IPR006679">
    <property type="entry name" value="Adenine_deam"/>
</dbReference>
<dbReference type="InterPro" id="IPR026912">
    <property type="entry name" value="Adenine_deam_C"/>
</dbReference>
<dbReference type="InterPro" id="IPR006680">
    <property type="entry name" value="Amidohydro-rel"/>
</dbReference>
<dbReference type="InterPro" id="IPR011059">
    <property type="entry name" value="Metal-dep_hydrolase_composite"/>
</dbReference>
<dbReference type="InterPro" id="IPR032466">
    <property type="entry name" value="Metal_Hydrolase"/>
</dbReference>
<dbReference type="NCBIfam" id="TIGR01178">
    <property type="entry name" value="ade"/>
    <property type="match status" value="1"/>
</dbReference>
<dbReference type="PANTHER" id="PTHR11113:SF2">
    <property type="entry name" value="ADENINE DEAMINASE"/>
    <property type="match status" value="1"/>
</dbReference>
<dbReference type="PANTHER" id="PTHR11113">
    <property type="entry name" value="N-ACETYLGLUCOSAMINE-6-PHOSPHATE DEACETYLASE"/>
    <property type="match status" value="1"/>
</dbReference>
<dbReference type="Pfam" id="PF13382">
    <property type="entry name" value="Adenine_deam_C"/>
    <property type="match status" value="1"/>
</dbReference>
<dbReference type="Pfam" id="PF01979">
    <property type="entry name" value="Amidohydro_1"/>
    <property type="match status" value="1"/>
</dbReference>
<dbReference type="SUPFAM" id="SSF51338">
    <property type="entry name" value="Composite domain of metallo-dependent hydrolases"/>
    <property type="match status" value="1"/>
</dbReference>
<dbReference type="SUPFAM" id="SSF51556">
    <property type="entry name" value="Metallo-dependent hydrolases"/>
    <property type="match status" value="1"/>
</dbReference>
<feature type="chain" id="PRO_0000142412" description="Adenine deaminase">
    <location>
        <begin position="1"/>
        <end position="570"/>
    </location>
</feature>
<organism>
    <name type="scientific">Clostridium acetobutylicum (strain ATCC 824 / DSM 792 / JCM 1419 / IAM 19013 / LMG 5710 / NBRC 13948 / NRRL B-527 / VKM B-1787 / 2291 / W)</name>
    <dbReference type="NCBI Taxonomy" id="272562"/>
    <lineage>
        <taxon>Bacteria</taxon>
        <taxon>Bacillati</taxon>
        <taxon>Bacillota</taxon>
        <taxon>Clostridia</taxon>
        <taxon>Eubacteriales</taxon>
        <taxon>Clostridiaceae</taxon>
        <taxon>Clostridium</taxon>
    </lineage>
</organism>
<reference key="1">
    <citation type="journal article" date="2001" name="J. Bacteriol.">
        <title>Genome sequence and comparative analysis of the solvent-producing bacterium Clostridium acetobutylicum.</title>
        <authorList>
            <person name="Noelling J."/>
            <person name="Breton G."/>
            <person name="Omelchenko M.V."/>
            <person name="Makarova K.S."/>
            <person name="Zeng Q."/>
            <person name="Gibson R."/>
            <person name="Lee H.M."/>
            <person name="Dubois J."/>
            <person name="Qiu D."/>
            <person name="Hitti J."/>
            <person name="Wolf Y.I."/>
            <person name="Tatusov R.L."/>
            <person name="Sabathe F."/>
            <person name="Doucette-Stamm L.A."/>
            <person name="Soucaille P."/>
            <person name="Daly M.J."/>
            <person name="Bennett G.N."/>
            <person name="Koonin E.V."/>
            <person name="Smith D.R."/>
        </authorList>
    </citation>
    <scope>NUCLEOTIDE SEQUENCE [LARGE SCALE GENOMIC DNA]</scope>
    <source>
        <strain>ATCC 824 / DSM 792 / JCM 1419 / IAM 19013 / LMG 5710 / NBRC 13948 / NRRL B-527 / VKM B-1787 / 2291 / W</strain>
    </source>
</reference>
<keyword id="KW-0378">Hydrolase</keyword>
<keyword id="KW-0464">Manganese</keyword>
<keyword id="KW-1185">Reference proteome</keyword>